<proteinExistence type="evidence at protein level"/>
<protein>
    <recommendedName>
        <fullName>Cadmium, cobalt and zinc/H(+)-K(+) antiporter</fullName>
    </recommendedName>
</protein>
<reference key="1">
    <citation type="journal article" date="1997" name="Microbiology">
        <title>Sequence of the Bacillus subtilis genome region in the vicinity of the lev operon reveals two new extracytoplasmic function RNA polymerase sigma factors SigV and SigZ.</title>
        <authorList>
            <person name="Sorokin A."/>
            <person name="Bolotin A."/>
            <person name="Purnelle B."/>
            <person name="Hilbert H."/>
            <person name="Lauber J."/>
            <person name="Duesterhoeft A."/>
            <person name="Ehrlich S.D."/>
        </authorList>
    </citation>
    <scope>NUCLEOTIDE SEQUENCE [GENOMIC DNA]</scope>
    <source>
        <strain>168</strain>
    </source>
</reference>
<reference key="2">
    <citation type="journal article" date="1997" name="Nature">
        <title>The complete genome sequence of the Gram-positive bacterium Bacillus subtilis.</title>
        <authorList>
            <person name="Kunst F."/>
            <person name="Ogasawara N."/>
            <person name="Moszer I."/>
            <person name="Albertini A.M."/>
            <person name="Alloni G."/>
            <person name="Azevedo V."/>
            <person name="Bertero M.G."/>
            <person name="Bessieres P."/>
            <person name="Bolotin A."/>
            <person name="Borchert S."/>
            <person name="Borriss R."/>
            <person name="Boursier L."/>
            <person name="Brans A."/>
            <person name="Braun M."/>
            <person name="Brignell S.C."/>
            <person name="Bron S."/>
            <person name="Brouillet S."/>
            <person name="Bruschi C.V."/>
            <person name="Caldwell B."/>
            <person name="Capuano V."/>
            <person name="Carter N.M."/>
            <person name="Choi S.-K."/>
            <person name="Codani J.-J."/>
            <person name="Connerton I.F."/>
            <person name="Cummings N.J."/>
            <person name="Daniel R.A."/>
            <person name="Denizot F."/>
            <person name="Devine K.M."/>
            <person name="Duesterhoeft A."/>
            <person name="Ehrlich S.D."/>
            <person name="Emmerson P.T."/>
            <person name="Entian K.-D."/>
            <person name="Errington J."/>
            <person name="Fabret C."/>
            <person name="Ferrari E."/>
            <person name="Foulger D."/>
            <person name="Fritz C."/>
            <person name="Fujita M."/>
            <person name="Fujita Y."/>
            <person name="Fuma S."/>
            <person name="Galizzi A."/>
            <person name="Galleron N."/>
            <person name="Ghim S.-Y."/>
            <person name="Glaser P."/>
            <person name="Goffeau A."/>
            <person name="Golightly E.J."/>
            <person name="Grandi G."/>
            <person name="Guiseppi G."/>
            <person name="Guy B.J."/>
            <person name="Haga K."/>
            <person name="Haiech J."/>
            <person name="Harwood C.R."/>
            <person name="Henaut A."/>
            <person name="Hilbert H."/>
            <person name="Holsappel S."/>
            <person name="Hosono S."/>
            <person name="Hullo M.-F."/>
            <person name="Itaya M."/>
            <person name="Jones L.-M."/>
            <person name="Joris B."/>
            <person name="Karamata D."/>
            <person name="Kasahara Y."/>
            <person name="Klaerr-Blanchard M."/>
            <person name="Klein C."/>
            <person name="Kobayashi Y."/>
            <person name="Koetter P."/>
            <person name="Koningstein G."/>
            <person name="Krogh S."/>
            <person name="Kumano M."/>
            <person name="Kurita K."/>
            <person name="Lapidus A."/>
            <person name="Lardinois S."/>
            <person name="Lauber J."/>
            <person name="Lazarevic V."/>
            <person name="Lee S.-M."/>
            <person name="Levine A."/>
            <person name="Liu H."/>
            <person name="Masuda S."/>
            <person name="Mauel C."/>
            <person name="Medigue C."/>
            <person name="Medina N."/>
            <person name="Mellado R.P."/>
            <person name="Mizuno M."/>
            <person name="Moestl D."/>
            <person name="Nakai S."/>
            <person name="Noback M."/>
            <person name="Noone D."/>
            <person name="O'Reilly M."/>
            <person name="Ogawa K."/>
            <person name="Ogiwara A."/>
            <person name="Oudega B."/>
            <person name="Park S.-H."/>
            <person name="Parro V."/>
            <person name="Pohl T.M."/>
            <person name="Portetelle D."/>
            <person name="Porwollik S."/>
            <person name="Prescott A.M."/>
            <person name="Presecan E."/>
            <person name="Pujic P."/>
            <person name="Purnelle B."/>
            <person name="Rapoport G."/>
            <person name="Rey M."/>
            <person name="Reynolds S."/>
            <person name="Rieger M."/>
            <person name="Rivolta C."/>
            <person name="Rocha E."/>
            <person name="Roche B."/>
            <person name="Rose M."/>
            <person name="Sadaie Y."/>
            <person name="Sato T."/>
            <person name="Scanlan E."/>
            <person name="Schleich S."/>
            <person name="Schroeter R."/>
            <person name="Scoffone F."/>
            <person name="Sekiguchi J."/>
            <person name="Sekowska A."/>
            <person name="Seror S.J."/>
            <person name="Serror P."/>
            <person name="Shin B.-S."/>
            <person name="Soldo B."/>
            <person name="Sorokin A."/>
            <person name="Tacconi E."/>
            <person name="Takagi T."/>
            <person name="Takahashi H."/>
            <person name="Takemaru K."/>
            <person name="Takeuchi M."/>
            <person name="Tamakoshi A."/>
            <person name="Tanaka T."/>
            <person name="Terpstra P."/>
            <person name="Tognoni A."/>
            <person name="Tosato V."/>
            <person name="Uchiyama S."/>
            <person name="Vandenbol M."/>
            <person name="Vannier F."/>
            <person name="Vassarotti A."/>
            <person name="Viari A."/>
            <person name="Wambutt R."/>
            <person name="Wedler E."/>
            <person name="Wedler H."/>
            <person name="Weitzenegger T."/>
            <person name="Winters P."/>
            <person name="Wipat A."/>
            <person name="Yamamoto H."/>
            <person name="Yamane K."/>
            <person name="Yasumoto K."/>
            <person name="Yata K."/>
            <person name="Yoshida K."/>
            <person name="Yoshikawa H.-F."/>
            <person name="Zumstein E."/>
            <person name="Yoshikawa H."/>
            <person name="Danchin A."/>
        </authorList>
    </citation>
    <scope>NUCLEOTIDE SEQUENCE [LARGE SCALE GENOMIC DNA]</scope>
    <source>
        <strain>168</strain>
    </source>
</reference>
<reference key="3">
    <citation type="journal article" date="1997" name="Gene">
        <title>A Bacillus subtilis locus encoding several gene products affecting transport of cations.</title>
        <authorList>
            <person name="Sturr M.G."/>
            <person name="Ablooglu A.J."/>
            <person name="Krulwich T.A."/>
        </authorList>
    </citation>
    <scope>NUCLEOTIDE SEQUENCE [GENOMIC DNA] OF 17-311</scope>
    <source>
        <strain>168 / JH642</strain>
    </source>
</reference>
<reference key="4">
    <citation type="journal article" date="2000" name="J. Bacteriol.">
        <title>Two types of Bacillus subtilis tetA(L) deletion strains reveal the physiological importance of TetA(L) in K(+) acquisition as well as in Na(+), alkali, and tetracycline resistance.</title>
        <authorList>
            <person name="Wang W."/>
            <person name="Guffanti A.A."/>
            <person name="Wei Y."/>
            <person name="Ito M."/>
            <person name="Krulwich T.A."/>
        </authorList>
    </citation>
    <scope>INVOLVEMENT IN RESISTANCE TO COBALT</scope>
    <source>
        <strain>BD99 / MS94</strain>
    </source>
</reference>
<reference key="5">
    <citation type="journal article" date="2002" name="Mol. Microbiol.">
        <title>An antiport mechanism for a member of the cation diffusion facilitator family: divalent cations efflux in exchange for K+ and H+.</title>
        <authorList>
            <person name="Guffanti A.A."/>
            <person name="Wei Y."/>
            <person name="Rood S.V."/>
            <person name="Krulwich T.A."/>
        </authorList>
    </citation>
    <scope>FUNCTION IN DIVALENT CATION EFFLUX</scope>
    <source>
        <strain>BD99 / MS94</strain>
    </source>
</reference>
<reference key="6">
    <citation type="journal article" date="2005" name="Mol. Microbiol.">
        <title>Genetic and physiological responses of Bacillus subtilis to metal ion stress.</title>
        <authorList>
            <person name="Moore C.M."/>
            <person name="Gaballa A."/>
            <person name="Hui M."/>
            <person name="Ye R.W."/>
            <person name="Helmann J.D."/>
        </authorList>
    </citation>
    <scope>REPRESSION BY CZRA</scope>
    <source>
        <strain>168</strain>
    </source>
</reference>
<dbReference type="EMBL" id="U93876">
    <property type="protein sequence ID" value="AAB80907.1"/>
    <property type="molecule type" value="Genomic_DNA"/>
</dbReference>
<dbReference type="EMBL" id="AL009126">
    <property type="protein sequence ID" value="CAB14606.1"/>
    <property type="molecule type" value="Genomic_DNA"/>
</dbReference>
<dbReference type="EMBL" id="U62055">
    <property type="protein sequence ID" value="AAB53029.1"/>
    <property type="molecule type" value="Genomic_DNA"/>
</dbReference>
<dbReference type="PIR" id="C69612">
    <property type="entry name" value="C69612"/>
</dbReference>
<dbReference type="RefSeq" id="NP_390542.1">
    <property type="nucleotide sequence ID" value="NC_000964.3"/>
</dbReference>
<dbReference type="RefSeq" id="WP_003229873.1">
    <property type="nucleotide sequence ID" value="NZ_OZ025638.1"/>
</dbReference>
<dbReference type="SMR" id="O07084"/>
<dbReference type="FunCoup" id="O07084">
    <property type="interactions" value="469"/>
</dbReference>
<dbReference type="STRING" id="224308.BSU26650"/>
<dbReference type="TCDB" id="2.A.4.1.3">
    <property type="family name" value="the cation diffusion facilitator (cdf) family"/>
</dbReference>
<dbReference type="PaxDb" id="224308-BSU26650"/>
<dbReference type="EnsemblBacteria" id="CAB14606">
    <property type="protein sequence ID" value="CAB14606"/>
    <property type="gene ID" value="BSU_26650"/>
</dbReference>
<dbReference type="GeneID" id="937630"/>
<dbReference type="KEGG" id="bsu:BSU26650"/>
<dbReference type="PATRIC" id="fig|224308.179.peg.2896"/>
<dbReference type="eggNOG" id="COG1230">
    <property type="taxonomic scope" value="Bacteria"/>
</dbReference>
<dbReference type="InParanoid" id="O07084"/>
<dbReference type="OrthoDB" id="9809646at2"/>
<dbReference type="PhylomeDB" id="O07084"/>
<dbReference type="BioCyc" id="BSUB:BSU26650-MONOMER"/>
<dbReference type="Proteomes" id="UP000001570">
    <property type="component" value="Chromosome"/>
</dbReference>
<dbReference type="GO" id="GO:0005886">
    <property type="term" value="C:plasma membrane"/>
    <property type="evidence" value="ECO:0000318"/>
    <property type="project" value="GO_Central"/>
</dbReference>
<dbReference type="GO" id="GO:0005385">
    <property type="term" value="F:zinc ion transmembrane transporter activity"/>
    <property type="evidence" value="ECO:0000318"/>
    <property type="project" value="GO_Central"/>
</dbReference>
<dbReference type="GO" id="GO:0006824">
    <property type="term" value="P:cobalt ion transport"/>
    <property type="evidence" value="ECO:0007669"/>
    <property type="project" value="UniProtKB-KW"/>
</dbReference>
<dbReference type="GO" id="GO:0006813">
    <property type="term" value="P:potassium ion transport"/>
    <property type="evidence" value="ECO:0007669"/>
    <property type="project" value="UniProtKB-KW"/>
</dbReference>
<dbReference type="GO" id="GO:0071577">
    <property type="term" value="P:zinc ion transmembrane transport"/>
    <property type="evidence" value="ECO:0000318"/>
    <property type="project" value="GO_Central"/>
</dbReference>
<dbReference type="Gene3D" id="1.20.1510.10">
    <property type="entry name" value="Cation efflux protein transmembrane domain"/>
    <property type="match status" value="1"/>
</dbReference>
<dbReference type="Gene3D" id="3.30.70.1350">
    <property type="entry name" value="Cation efflux protein, cytoplasmic domain"/>
    <property type="match status" value="1"/>
</dbReference>
<dbReference type="InterPro" id="IPR002524">
    <property type="entry name" value="Cation_efflux"/>
</dbReference>
<dbReference type="InterPro" id="IPR027470">
    <property type="entry name" value="Cation_efflux_CTD"/>
</dbReference>
<dbReference type="InterPro" id="IPR036837">
    <property type="entry name" value="Cation_efflux_CTD_sf"/>
</dbReference>
<dbReference type="InterPro" id="IPR027469">
    <property type="entry name" value="Cation_efflux_TMD_sf"/>
</dbReference>
<dbReference type="InterPro" id="IPR050681">
    <property type="entry name" value="CDF/SLC30A"/>
</dbReference>
<dbReference type="NCBIfam" id="TIGR01297">
    <property type="entry name" value="CDF"/>
    <property type="match status" value="1"/>
</dbReference>
<dbReference type="PANTHER" id="PTHR11562">
    <property type="entry name" value="CATION EFFLUX PROTEIN/ ZINC TRANSPORTER"/>
    <property type="match status" value="1"/>
</dbReference>
<dbReference type="PANTHER" id="PTHR11562:SF17">
    <property type="entry name" value="RE54080P-RELATED"/>
    <property type="match status" value="1"/>
</dbReference>
<dbReference type="Pfam" id="PF01545">
    <property type="entry name" value="Cation_efflux"/>
    <property type="match status" value="1"/>
</dbReference>
<dbReference type="Pfam" id="PF16916">
    <property type="entry name" value="ZT_dimer"/>
    <property type="match status" value="1"/>
</dbReference>
<dbReference type="SUPFAM" id="SSF160240">
    <property type="entry name" value="Cation efflux protein cytoplasmic domain-like"/>
    <property type="match status" value="1"/>
</dbReference>
<dbReference type="SUPFAM" id="SSF161111">
    <property type="entry name" value="Cation efflux protein transmembrane domain-like"/>
    <property type="match status" value="1"/>
</dbReference>
<sequence>MGHNHNEGANKKVLLISFIMITGYMIIEAIGGFLTNSLALLSDAGHMLSDSISLMVALIAFTLAEKKANHNKTFGYKRFEILAAVINGAALILISLYIIYEAIERFSNPPKVATTGMLTISIIGLVVNLLVAWIMMSGGDTKNNLNIRGAYLHVISDMLGSVGAILAAILIIFFGWGWADPLASIIVAILVLRSGYNVTKDSIHILMEGTPENIDVSDIIRTIEGTEGIQNIHDLHIWSITSGLNALSCHAVVDDQLTISESENILRKIEHELEHKGITHVTIQMETEAHNHDNAILCQPKMEKQRDHHHH</sequence>
<evidence type="ECO:0000255" key="1"/>
<evidence type="ECO:0000269" key="2">
    <source>
    </source>
</evidence>
<evidence type="ECO:0000269" key="3">
    <source>
    </source>
</evidence>
<evidence type="ECO:0000305" key="4"/>
<keyword id="KW-0104">Cadmium</keyword>
<keyword id="KW-1003">Cell membrane</keyword>
<keyword id="KW-0170">Cobalt</keyword>
<keyword id="KW-0171">Cobalt transport</keyword>
<keyword id="KW-0406">Ion transport</keyword>
<keyword id="KW-0472">Membrane</keyword>
<keyword id="KW-0630">Potassium</keyword>
<keyword id="KW-0633">Potassium transport</keyword>
<keyword id="KW-1185">Reference proteome</keyword>
<keyword id="KW-0812">Transmembrane</keyword>
<keyword id="KW-1133">Transmembrane helix</keyword>
<keyword id="KW-0813">Transport</keyword>
<keyword id="KW-0862">Zinc</keyword>
<keyword id="KW-0864">Zinc transport</keyword>
<organism>
    <name type="scientific">Bacillus subtilis (strain 168)</name>
    <dbReference type="NCBI Taxonomy" id="224308"/>
    <lineage>
        <taxon>Bacteria</taxon>
        <taxon>Bacillati</taxon>
        <taxon>Bacillota</taxon>
        <taxon>Bacilli</taxon>
        <taxon>Bacillales</taxon>
        <taxon>Bacillaceae</taxon>
        <taxon>Bacillus</taxon>
    </lineage>
</organism>
<comment type="function">
    <text evidence="2">Involved in divalent cation and potassium homeostasis in the cell. Catalyzes the active efflux of zinc, cadmium and cobalt, in exchange for potassium and H(+) ions.</text>
</comment>
<comment type="subcellular location">
    <subcellularLocation>
        <location evidence="4">Cell membrane</location>
        <topology evidence="4">Multi-pass membrane protein</topology>
    </subcellularLocation>
</comment>
<comment type="induction">
    <text evidence="3">Repressed by CzrA.</text>
</comment>
<comment type="similarity">
    <text evidence="4">Belongs to the cation diffusion facilitator (CDF) transporter (TC 2.A.4) family. SLC30A subfamily.</text>
</comment>
<gene>
    <name type="primary">czcD</name>
    <name type="synonym">yrdO</name>
    <name type="ordered locus">BSU26650</name>
</gene>
<accession>O07084</accession>
<accession>P71023</accession>
<accession>Q796A4</accession>
<name>CZCD_BACSU</name>
<feature type="chain" id="PRO_0000337067" description="Cadmium, cobalt and zinc/H(+)-K(+) antiporter">
    <location>
        <begin position="1"/>
        <end position="311"/>
    </location>
</feature>
<feature type="topological domain" description="Extracellular" evidence="1">
    <location>
        <begin position="1"/>
        <end position="12"/>
    </location>
</feature>
<feature type="transmembrane region" description="Helical" evidence="1">
    <location>
        <begin position="13"/>
        <end position="33"/>
    </location>
</feature>
<feature type="topological domain" description="Cytoplasmic" evidence="1">
    <location>
        <begin position="34"/>
        <end position="43"/>
    </location>
</feature>
<feature type="transmembrane region" description="Helical" evidence="1">
    <location>
        <begin position="44"/>
        <end position="64"/>
    </location>
</feature>
<feature type="topological domain" description="Extracellular" evidence="1">
    <location>
        <begin position="65"/>
        <end position="78"/>
    </location>
</feature>
<feature type="transmembrane region" description="Helical" evidence="1">
    <location>
        <begin position="79"/>
        <end position="99"/>
    </location>
</feature>
<feature type="topological domain" description="Cytoplasmic" evidence="1">
    <location>
        <begin position="100"/>
        <end position="115"/>
    </location>
</feature>
<feature type="transmembrane region" description="Helical" evidence="1">
    <location>
        <begin position="116"/>
        <end position="136"/>
    </location>
</feature>
<feature type="topological domain" description="Extracellular" evidence="1">
    <location>
        <begin position="137"/>
        <end position="157"/>
    </location>
</feature>
<feature type="transmembrane region" description="Helical" evidence="1">
    <location>
        <begin position="158"/>
        <end position="178"/>
    </location>
</feature>
<feature type="topological domain" description="Cytoplasmic" evidence="1">
    <location>
        <begin position="179"/>
        <end position="311"/>
    </location>
</feature>
<feature type="sequence conflict" description="In Ref. 3; AAB53029." evidence="4" ref="3">
    <original>D</original>
    <variation>N</variation>
    <location>
        <position position="180"/>
    </location>
</feature>